<organism>
    <name type="scientific">Rhizobium etli (strain CIAT 652)</name>
    <dbReference type="NCBI Taxonomy" id="491916"/>
    <lineage>
        <taxon>Bacteria</taxon>
        <taxon>Pseudomonadati</taxon>
        <taxon>Pseudomonadota</taxon>
        <taxon>Alphaproteobacteria</taxon>
        <taxon>Hyphomicrobiales</taxon>
        <taxon>Rhizobiaceae</taxon>
        <taxon>Rhizobium/Agrobacterium group</taxon>
        <taxon>Rhizobium</taxon>
    </lineage>
</organism>
<name>RL9_RHIE6</name>
<dbReference type="EMBL" id="CP001074">
    <property type="protein sequence ID" value="ACE90483.1"/>
    <property type="molecule type" value="Genomic_DNA"/>
</dbReference>
<dbReference type="SMR" id="B3PUT4"/>
<dbReference type="KEGG" id="rec:RHECIAT_CH0001505"/>
<dbReference type="eggNOG" id="COG0359">
    <property type="taxonomic scope" value="Bacteria"/>
</dbReference>
<dbReference type="HOGENOM" id="CLU_078938_1_0_5"/>
<dbReference type="Proteomes" id="UP000008817">
    <property type="component" value="Chromosome"/>
</dbReference>
<dbReference type="GO" id="GO:1990904">
    <property type="term" value="C:ribonucleoprotein complex"/>
    <property type="evidence" value="ECO:0007669"/>
    <property type="project" value="UniProtKB-KW"/>
</dbReference>
<dbReference type="GO" id="GO:0005840">
    <property type="term" value="C:ribosome"/>
    <property type="evidence" value="ECO:0007669"/>
    <property type="project" value="UniProtKB-KW"/>
</dbReference>
<dbReference type="GO" id="GO:0019843">
    <property type="term" value="F:rRNA binding"/>
    <property type="evidence" value="ECO:0007669"/>
    <property type="project" value="UniProtKB-UniRule"/>
</dbReference>
<dbReference type="GO" id="GO:0003735">
    <property type="term" value="F:structural constituent of ribosome"/>
    <property type="evidence" value="ECO:0007669"/>
    <property type="project" value="InterPro"/>
</dbReference>
<dbReference type="GO" id="GO:0006412">
    <property type="term" value="P:translation"/>
    <property type="evidence" value="ECO:0007669"/>
    <property type="project" value="UniProtKB-UniRule"/>
</dbReference>
<dbReference type="Gene3D" id="3.10.430.100">
    <property type="entry name" value="Ribosomal protein L9, C-terminal domain"/>
    <property type="match status" value="1"/>
</dbReference>
<dbReference type="Gene3D" id="3.40.5.10">
    <property type="entry name" value="Ribosomal protein L9, N-terminal domain"/>
    <property type="match status" value="1"/>
</dbReference>
<dbReference type="HAMAP" id="MF_00503">
    <property type="entry name" value="Ribosomal_bL9"/>
    <property type="match status" value="1"/>
</dbReference>
<dbReference type="InterPro" id="IPR000244">
    <property type="entry name" value="Ribosomal_bL9"/>
</dbReference>
<dbReference type="InterPro" id="IPR009027">
    <property type="entry name" value="Ribosomal_bL9/RNase_H1_N"/>
</dbReference>
<dbReference type="InterPro" id="IPR020594">
    <property type="entry name" value="Ribosomal_bL9_bac/chp"/>
</dbReference>
<dbReference type="InterPro" id="IPR020069">
    <property type="entry name" value="Ribosomal_bL9_C"/>
</dbReference>
<dbReference type="InterPro" id="IPR036791">
    <property type="entry name" value="Ribosomal_bL9_C_sf"/>
</dbReference>
<dbReference type="InterPro" id="IPR020070">
    <property type="entry name" value="Ribosomal_bL9_N"/>
</dbReference>
<dbReference type="InterPro" id="IPR036935">
    <property type="entry name" value="Ribosomal_bL9_N_sf"/>
</dbReference>
<dbReference type="NCBIfam" id="TIGR00158">
    <property type="entry name" value="L9"/>
    <property type="match status" value="1"/>
</dbReference>
<dbReference type="PANTHER" id="PTHR21368">
    <property type="entry name" value="50S RIBOSOMAL PROTEIN L9"/>
    <property type="match status" value="1"/>
</dbReference>
<dbReference type="Pfam" id="PF03948">
    <property type="entry name" value="Ribosomal_L9_C"/>
    <property type="match status" value="1"/>
</dbReference>
<dbReference type="Pfam" id="PF01281">
    <property type="entry name" value="Ribosomal_L9_N"/>
    <property type="match status" value="1"/>
</dbReference>
<dbReference type="SUPFAM" id="SSF55658">
    <property type="entry name" value="L9 N-domain-like"/>
    <property type="match status" value="1"/>
</dbReference>
<dbReference type="SUPFAM" id="SSF55653">
    <property type="entry name" value="Ribosomal protein L9 C-domain"/>
    <property type="match status" value="1"/>
</dbReference>
<dbReference type="PROSITE" id="PS00651">
    <property type="entry name" value="RIBOSOMAL_L9"/>
    <property type="match status" value="1"/>
</dbReference>
<keyword id="KW-0687">Ribonucleoprotein</keyword>
<keyword id="KW-0689">Ribosomal protein</keyword>
<keyword id="KW-0694">RNA-binding</keyword>
<keyword id="KW-0699">rRNA-binding</keyword>
<sequence>MEVILLERISKLGQMGETVKVRDGFARNYLLPLGKALRANAANKARFESERATLEARNLERKSEAQKVADVLDGKSFIVVRSAGETGQLYGSVAARDVVEVLAAEGFNIGRNQVHLNTPIKAIGLHKVELQLHAEVEIHVELNVARSAEEAERQAKGEELTSVDAIYGVDEDALRPEDFFDPEADGIDEDEA</sequence>
<reference key="1">
    <citation type="journal article" date="2010" name="Appl. Environ. Microbiol.">
        <title>Conserved symbiotic plasmid DNA sequences in the multireplicon pangenomic structure of Rhizobium etli.</title>
        <authorList>
            <person name="Gonzalez V."/>
            <person name="Acosta J.L."/>
            <person name="Santamaria R.I."/>
            <person name="Bustos P."/>
            <person name="Fernandez J.L."/>
            <person name="Hernandez Gonzalez I.L."/>
            <person name="Diaz R."/>
            <person name="Flores M."/>
            <person name="Palacios R."/>
            <person name="Mora J."/>
            <person name="Davila G."/>
        </authorList>
    </citation>
    <scope>NUCLEOTIDE SEQUENCE [LARGE SCALE GENOMIC DNA]</scope>
    <source>
        <strain>CIAT 652</strain>
    </source>
</reference>
<comment type="function">
    <text evidence="1">Binds to the 23S rRNA.</text>
</comment>
<comment type="similarity">
    <text evidence="1">Belongs to the bacterial ribosomal protein bL9 family.</text>
</comment>
<feature type="chain" id="PRO_1000126959" description="Large ribosomal subunit protein bL9">
    <location>
        <begin position="1"/>
        <end position="192"/>
    </location>
</feature>
<feature type="region of interest" description="Disordered" evidence="2">
    <location>
        <begin position="172"/>
        <end position="192"/>
    </location>
</feature>
<feature type="compositionally biased region" description="Acidic residues" evidence="2">
    <location>
        <begin position="179"/>
        <end position="192"/>
    </location>
</feature>
<accession>B3PUT4</accession>
<protein>
    <recommendedName>
        <fullName evidence="1">Large ribosomal subunit protein bL9</fullName>
    </recommendedName>
    <alternativeName>
        <fullName evidence="3">50S ribosomal protein L9</fullName>
    </alternativeName>
</protein>
<proteinExistence type="inferred from homology"/>
<gene>
    <name evidence="1" type="primary">rplI</name>
    <name type="ordered locus">RHECIAT_CH0001505</name>
</gene>
<evidence type="ECO:0000255" key="1">
    <source>
        <dbReference type="HAMAP-Rule" id="MF_00503"/>
    </source>
</evidence>
<evidence type="ECO:0000256" key="2">
    <source>
        <dbReference type="SAM" id="MobiDB-lite"/>
    </source>
</evidence>
<evidence type="ECO:0000305" key="3"/>